<keyword id="KW-0963">Cytoplasm</keyword>
<keyword id="KW-0378">Hydrolase</keyword>
<keyword id="KW-0645">Protease</keyword>
<keyword id="KW-1185">Reference proteome</keyword>
<keyword id="KW-0720">Serine protease</keyword>
<organism>
    <name type="scientific">Desulfosudis oleivorans (strain DSM 6200 / JCM 39069 / Hxd3)</name>
    <name type="common">Desulfococcus oleovorans</name>
    <dbReference type="NCBI Taxonomy" id="96561"/>
    <lineage>
        <taxon>Bacteria</taxon>
        <taxon>Pseudomonadati</taxon>
        <taxon>Thermodesulfobacteriota</taxon>
        <taxon>Desulfobacteria</taxon>
        <taxon>Desulfobacterales</taxon>
        <taxon>Desulfosudaceae</taxon>
        <taxon>Desulfosudis</taxon>
    </lineage>
</organism>
<proteinExistence type="inferred from homology"/>
<accession>A8ZXB7</accession>
<sequence>MPLIPMVIEQTSRGERAFDIYSRLLKDRIVFIGSAIDDETANLLIAQLLFLESEDPDKDINFYINSPGGKVSAGMAIYDTMQYIKSDIATVCIGHAASMGAFLLAAGAKGKRFSLPNSRIMIHQPMGGAQGQASDIAIQAKEILRMKDILNQILAHHTGKPLEQIQVDTDRDFFMSGEEAKAYGIVDHVITDRSDLDKLEKPQEA</sequence>
<dbReference type="EC" id="3.4.21.92" evidence="1"/>
<dbReference type="EMBL" id="CP000859">
    <property type="protein sequence ID" value="ABW68496.1"/>
    <property type="molecule type" value="Genomic_DNA"/>
</dbReference>
<dbReference type="RefSeq" id="WP_012176107.1">
    <property type="nucleotide sequence ID" value="NC_009943.1"/>
</dbReference>
<dbReference type="SMR" id="A8ZXB7"/>
<dbReference type="STRING" id="96561.Dole_2693"/>
<dbReference type="MEROPS" id="S14.001"/>
<dbReference type="KEGG" id="dol:Dole_2693"/>
<dbReference type="eggNOG" id="COG0740">
    <property type="taxonomic scope" value="Bacteria"/>
</dbReference>
<dbReference type="HOGENOM" id="CLU_058707_3_2_7"/>
<dbReference type="OrthoDB" id="9802800at2"/>
<dbReference type="Proteomes" id="UP000008561">
    <property type="component" value="Chromosome"/>
</dbReference>
<dbReference type="GO" id="GO:0005737">
    <property type="term" value="C:cytoplasm"/>
    <property type="evidence" value="ECO:0007669"/>
    <property type="project" value="UniProtKB-SubCell"/>
</dbReference>
<dbReference type="GO" id="GO:0009368">
    <property type="term" value="C:endopeptidase Clp complex"/>
    <property type="evidence" value="ECO:0007669"/>
    <property type="project" value="TreeGrafter"/>
</dbReference>
<dbReference type="GO" id="GO:0004176">
    <property type="term" value="F:ATP-dependent peptidase activity"/>
    <property type="evidence" value="ECO:0007669"/>
    <property type="project" value="InterPro"/>
</dbReference>
<dbReference type="GO" id="GO:0051117">
    <property type="term" value="F:ATPase binding"/>
    <property type="evidence" value="ECO:0007669"/>
    <property type="project" value="TreeGrafter"/>
</dbReference>
<dbReference type="GO" id="GO:0004252">
    <property type="term" value="F:serine-type endopeptidase activity"/>
    <property type="evidence" value="ECO:0007669"/>
    <property type="project" value="UniProtKB-UniRule"/>
</dbReference>
<dbReference type="GO" id="GO:0006515">
    <property type="term" value="P:protein quality control for misfolded or incompletely synthesized proteins"/>
    <property type="evidence" value="ECO:0007669"/>
    <property type="project" value="TreeGrafter"/>
</dbReference>
<dbReference type="CDD" id="cd07017">
    <property type="entry name" value="S14_ClpP_2"/>
    <property type="match status" value="1"/>
</dbReference>
<dbReference type="FunFam" id="3.90.226.10:FF:000001">
    <property type="entry name" value="ATP-dependent Clp protease proteolytic subunit"/>
    <property type="match status" value="1"/>
</dbReference>
<dbReference type="Gene3D" id="3.90.226.10">
    <property type="entry name" value="2-enoyl-CoA Hydratase, Chain A, domain 1"/>
    <property type="match status" value="1"/>
</dbReference>
<dbReference type="HAMAP" id="MF_00444">
    <property type="entry name" value="ClpP"/>
    <property type="match status" value="1"/>
</dbReference>
<dbReference type="InterPro" id="IPR001907">
    <property type="entry name" value="ClpP"/>
</dbReference>
<dbReference type="InterPro" id="IPR029045">
    <property type="entry name" value="ClpP/crotonase-like_dom_sf"/>
</dbReference>
<dbReference type="InterPro" id="IPR023562">
    <property type="entry name" value="ClpP/TepA"/>
</dbReference>
<dbReference type="InterPro" id="IPR033135">
    <property type="entry name" value="ClpP_His_AS"/>
</dbReference>
<dbReference type="InterPro" id="IPR018215">
    <property type="entry name" value="ClpP_Ser_AS"/>
</dbReference>
<dbReference type="NCBIfam" id="TIGR00493">
    <property type="entry name" value="clpP"/>
    <property type="match status" value="1"/>
</dbReference>
<dbReference type="NCBIfam" id="NF001368">
    <property type="entry name" value="PRK00277.1"/>
    <property type="match status" value="1"/>
</dbReference>
<dbReference type="NCBIfam" id="NF009205">
    <property type="entry name" value="PRK12553.1"/>
    <property type="match status" value="1"/>
</dbReference>
<dbReference type="PANTHER" id="PTHR10381">
    <property type="entry name" value="ATP-DEPENDENT CLP PROTEASE PROTEOLYTIC SUBUNIT"/>
    <property type="match status" value="1"/>
</dbReference>
<dbReference type="PANTHER" id="PTHR10381:SF70">
    <property type="entry name" value="ATP-DEPENDENT CLP PROTEASE PROTEOLYTIC SUBUNIT"/>
    <property type="match status" value="1"/>
</dbReference>
<dbReference type="Pfam" id="PF00574">
    <property type="entry name" value="CLP_protease"/>
    <property type="match status" value="1"/>
</dbReference>
<dbReference type="PRINTS" id="PR00127">
    <property type="entry name" value="CLPPROTEASEP"/>
</dbReference>
<dbReference type="SUPFAM" id="SSF52096">
    <property type="entry name" value="ClpP/crotonase"/>
    <property type="match status" value="1"/>
</dbReference>
<dbReference type="PROSITE" id="PS00382">
    <property type="entry name" value="CLP_PROTEASE_HIS"/>
    <property type="match status" value="1"/>
</dbReference>
<dbReference type="PROSITE" id="PS00381">
    <property type="entry name" value="CLP_PROTEASE_SER"/>
    <property type="match status" value="1"/>
</dbReference>
<name>CLPP_DESOH</name>
<protein>
    <recommendedName>
        <fullName evidence="1">ATP-dependent Clp protease proteolytic subunit</fullName>
        <ecNumber evidence="1">3.4.21.92</ecNumber>
    </recommendedName>
    <alternativeName>
        <fullName evidence="1">Endopeptidase Clp</fullName>
    </alternativeName>
</protein>
<evidence type="ECO:0000255" key="1">
    <source>
        <dbReference type="HAMAP-Rule" id="MF_00444"/>
    </source>
</evidence>
<comment type="function">
    <text evidence="1">Cleaves peptides in various proteins in a process that requires ATP hydrolysis. Has a chymotrypsin-like activity. Plays a major role in the degradation of misfolded proteins.</text>
</comment>
<comment type="catalytic activity">
    <reaction evidence="1">
        <text>Hydrolysis of proteins to small peptides in the presence of ATP and magnesium. alpha-casein is the usual test substrate. In the absence of ATP, only oligopeptides shorter than five residues are hydrolyzed (such as succinyl-Leu-Tyr-|-NHMec, and Leu-Tyr-Leu-|-Tyr-Trp, in which cleavage of the -Tyr-|-Leu- and -Tyr-|-Trp bonds also occurs).</text>
        <dbReference type="EC" id="3.4.21.92"/>
    </reaction>
</comment>
<comment type="subunit">
    <text evidence="1">Fourteen ClpP subunits assemble into 2 heptameric rings which stack back to back to give a disk-like structure with a central cavity, resembling the structure of eukaryotic proteasomes.</text>
</comment>
<comment type="subcellular location">
    <subcellularLocation>
        <location evidence="1">Cytoplasm</location>
    </subcellularLocation>
</comment>
<comment type="similarity">
    <text evidence="1">Belongs to the peptidase S14 family.</text>
</comment>
<feature type="chain" id="PRO_1000206148" description="ATP-dependent Clp protease proteolytic subunit">
    <location>
        <begin position="1"/>
        <end position="205"/>
    </location>
</feature>
<feature type="active site" description="Nucleophile" evidence="1">
    <location>
        <position position="98"/>
    </location>
</feature>
<feature type="active site" evidence="1">
    <location>
        <position position="123"/>
    </location>
</feature>
<reference key="1">
    <citation type="submission" date="2007-10" db="EMBL/GenBank/DDBJ databases">
        <title>Complete sequence of Desulfococcus oleovorans Hxd3.</title>
        <authorList>
            <consortium name="US DOE Joint Genome Institute"/>
            <person name="Copeland A."/>
            <person name="Lucas S."/>
            <person name="Lapidus A."/>
            <person name="Barry K."/>
            <person name="Glavina del Rio T."/>
            <person name="Dalin E."/>
            <person name="Tice H."/>
            <person name="Pitluck S."/>
            <person name="Kiss H."/>
            <person name="Brettin T."/>
            <person name="Bruce D."/>
            <person name="Detter J.C."/>
            <person name="Han C."/>
            <person name="Schmutz J."/>
            <person name="Larimer F."/>
            <person name="Land M."/>
            <person name="Hauser L."/>
            <person name="Kyrpides N."/>
            <person name="Kim E."/>
            <person name="Wawrik B."/>
            <person name="Richardson P."/>
        </authorList>
    </citation>
    <scope>NUCLEOTIDE SEQUENCE [LARGE SCALE GENOMIC DNA]</scope>
    <source>
        <strain>DSM 6200 / JCM 39069 / Hxd3</strain>
    </source>
</reference>
<gene>
    <name evidence="1" type="primary">clpP</name>
    <name type="ordered locus">Dole_2693</name>
</gene>